<evidence type="ECO:0000250" key="1"/>
<evidence type="ECO:0000255" key="2"/>
<evidence type="ECO:0000305" key="3"/>
<organism>
    <name type="scientific">Xenopus laevis</name>
    <name type="common">African clawed frog</name>
    <dbReference type="NCBI Taxonomy" id="8355"/>
    <lineage>
        <taxon>Eukaryota</taxon>
        <taxon>Metazoa</taxon>
        <taxon>Chordata</taxon>
        <taxon>Craniata</taxon>
        <taxon>Vertebrata</taxon>
        <taxon>Euteleostomi</taxon>
        <taxon>Amphibia</taxon>
        <taxon>Batrachia</taxon>
        <taxon>Anura</taxon>
        <taxon>Pipoidea</taxon>
        <taxon>Pipidae</taxon>
        <taxon>Xenopodinae</taxon>
        <taxon>Xenopus</taxon>
        <taxon>Xenopus</taxon>
    </lineage>
</organism>
<name>TSN9_XENLA</name>
<proteinExistence type="evidence at transcript level"/>
<protein>
    <recommendedName>
        <fullName>Tetraspanin-9</fullName>
        <shortName>Tspan-9</shortName>
    </recommendedName>
</protein>
<comment type="subcellular location">
    <subcellularLocation>
        <location evidence="1">Membrane</location>
        <topology evidence="1">Multi-pass membrane protein</topology>
    </subcellularLocation>
</comment>
<comment type="similarity">
    <text evidence="3">Belongs to the tetraspanin (TM4SF) family.</text>
</comment>
<feature type="chain" id="PRO_0000375885" description="Tetraspanin-9">
    <location>
        <begin position="1"/>
        <end position="239"/>
    </location>
</feature>
<feature type="topological domain" description="Cytoplasmic" evidence="2">
    <location>
        <begin position="1"/>
        <end position="13"/>
    </location>
</feature>
<feature type="transmembrane region" description="Helical" evidence="2">
    <location>
        <begin position="14"/>
        <end position="34"/>
    </location>
</feature>
<feature type="topological domain" description="Extracellular" evidence="2">
    <location>
        <begin position="35"/>
        <end position="55"/>
    </location>
</feature>
<feature type="transmembrane region" description="Helical" evidence="2">
    <location>
        <begin position="56"/>
        <end position="76"/>
    </location>
</feature>
<feature type="topological domain" description="Cytoplasmic" evidence="2">
    <location>
        <begin position="77"/>
        <end position="85"/>
    </location>
</feature>
<feature type="transmembrane region" description="Helical" evidence="2">
    <location>
        <begin position="86"/>
        <end position="106"/>
    </location>
</feature>
<feature type="topological domain" description="Extracellular" evidence="2">
    <location>
        <begin position="107"/>
        <end position="203"/>
    </location>
</feature>
<feature type="transmembrane region" description="Helical" evidence="2">
    <location>
        <begin position="204"/>
        <end position="224"/>
    </location>
</feature>
<feature type="topological domain" description="Cytoplasmic" evidence="2">
    <location>
        <begin position="225"/>
        <end position="239"/>
    </location>
</feature>
<feature type="glycosylation site" description="N-linked (GlcNAc...) asparagine" evidence="2">
    <location>
        <position position="180"/>
    </location>
</feature>
<reference key="1">
    <citation type="submission" date="2004-07" db="EMBL/GenBank/DDBJ databases">
        <authorList>
            <consortium name="NIH - Xenopus Gene Collection (XGC) project"/>
        </authorList>
    </citation>
    <scope>NUCLEOTIDE SEQUENCE [LARGE SCALE MRNA]</scope>
    <source>
        <tissue>Embryo</tissue>
    </source>
</reference>
<sequence>MARGCLCCLKYMMFLFNLIFWLCGCGLLGVGIWLSVSQGNFATFSPSFPSLSAANLVIVIGTVVMVTGFLGCLGAIKENKCLLLSFFIILLIILLTELILLILFFVYMDKVNENAKQDLKDGLLLYNSENNVGLKNAWNIIQAEMHCCGVTDYTDWYPVLGENTVPDRCCMENSQDCGHNSTSLVWKTGCYEKVKMWFDDNKHVLGTIGMCILIIQILGMAFSMTLFQQIHRTGKKYDA</sequence>
<keyword id="KW-0325">Glycoprotein</keyword>
<keyword id="KW-0472">Membrane</keyword>
<keyword id="KW-1185">Reference proteome</keyword>
<keyword id="KW-0812">Transmembrane</keyword>
<keyword id="KW-1133">Transmembrane helix</keyword>
<accession>Q6DCQ3</accession>
<gene>
    <name type="primary">tspan9</name>
</gene>
<dbReference type="EMBL" id="BC077949">
    <property type="protein sequence ID" value="AAH77949.1"/>
    <property type="molecule type" value="mRNA"/>
</dbReference>
<dbReference type="RefSeq" id="NP_001087054.1">
    <property type="nucleotide sequence ID" value="NM_001093585.1"/>
</dbReference>
<dbReference type="RefSeq" id="XP_018109788.1">
    <property type="nucleotide sequence ID" value="XM_018254299.1"/>
</dbReference>
<dbReference type="SMR" id="Q6DCQ3"/>
<dbReference type="GlyCosmos" id="Q6DCQ3">
    <property type="glycosylation" value="1 site, No reported glycans"/>
</dbReference>
<dbReference type="DNASU" id="446889"/>
<dbReference type="GeneID" id="446889"/>
<dbReference type="KEGG" id="xla:446889"/>
<dbReference type="AGR" id="Xenbase:XB-GENE-956627"/>
<dbReference type="CTD" id="446889"/>
<dbReference type="Xenbase" id="XB-GENE-956627">
    <property type="gene designation" value="tspan9.S"/>
</dbReference>
<dbReference type="OMA" id="DCCGANG"/>
<dbReference type="OrthoDB" id="432835at2759"/>
<dbReference type="Proteomes" id="UP000186698">
    <property type="component" value="Chromosome 3S"/>
</dbReference>
<dbReference type="Bgee" id="446889">
    <property type="expression patterns" value="Expressed in internal ear and 19 other cell types or tissues"/>
</dbReference>
<dbReference type="GO" id="GO:0005886">
    <property type="term" value="C:plasma membrane"/>
    <property type="evidence" value="ECO:0000318"/>
    <property type="project" value="GO_Central"/>
</dbReference>
<dbReference type="CDD" id="cd03165">
    <property type="entry name" value="NET-5_like_LEL"/>
    <property type="match status" value="1"/>
</dbReference>
<dbReference type="FunFam" id="1.10.1450.10:FF:000008">
    <property type="entry name" value="Tetraspanin"/>
    <property type="match status" value="1"/>
</dbReference>
<dbReference type="Gene3D" id="1.10.1450.10">
    <property type="entry name" value="Tetraspanin"/>
    <property type="match status" value="1"/>
</dbReference>
<dbReference type="InterPro" id="IPR018499">
    <property type="entry name" value="Tetraspanin/Peripherin"/>
</dbReference>
<dbReference type="InterPro" id="IPR000301">
    <property type="entry name" value="Tetraspanin_animals"/>
</dbReference>
<dbReference type="InterPro" id="IPR018503">
    <property type="entry name" value="Tetraspanin_CS"/>
</dbReference>
<dbReference type="InterPro" id="IPR008952">
    <property type="entry name" value="Tetraspanin_EC2_sf"/>
</dbReference>
<dbReference type="PANTHER" id="PTHR19282">
    <property type="entry name" value="TETRASPANIN"/>
    <property type="match status" value="1"/>
</dbReference>
<dbReference type="PANTHER" id="PTHR19282:SF41">
    <property type="entry name" value="TETRASPANIN-9"/>
    <property type="match status" value="1"/>
</dbReference>
<dbReference type="Pfam" id="PF00335">
    <property type="entry name" value="Tetraspanin"/>
    <property type="match status" value="1"/>
</dbReference>
<dbReference type="PIRSF" id="PIRSF002419">
    <property type="entry name" value="Tetraspanin"/>
    <property type="match status" value="1"/>
</dbReference>
<dbReference type="PRINTS" id="PR00259">
    <property type="entry name" value="TMFOUR"/>
</dbReference>
<dbReference type="SUPFAM" id="SSF48652">
    <property type="entry name" value="Tetraspanin"/>
    <property type="match status" value="1"/>
</dbReference>
<dbReference type="PROSITE" id="PS00421">
    <property type="entry name" value="TM4_1"/>
    <property type="match status" value="1"/>
</dbReference>